<feature type="chain" id="PRO_0000046289" description="Plasma membrane ATPase 1">
    <location>
        <begin position="1"/>
        <end position="956"/>
    </location>
</feature>
<feature type="topological domain" description="Cytoplasmic" evidence="2">
    <location>
        <begin position="1"/>
        <end position="65"/>
    </location>
</feature>
<feature type="transmembrane region" description="Helical" evidence="2">
    <location>
        <begin position="66"/>
        <end position="85"/>
    </location>
</feature>
<feature type="topological domain" description="Extracellular" evidence="2">
    <location>
        <begin position="86"/>
        <end position="97"/>
    </location>
</feature>
<feature type="transmembrane region" description="Helical" evidence="2">
    <location>
        <begin position="98"/>
        <end position="118"/>
    </location>
</feature>
<feature type="topological domain" description="Cytoplasmic" evidence="2">
    <location>
        <begin position="119"/>
        <end position="247"/>
    </location>
</feature>
<feature type="transmembrane region" description="Helical" evidence="2">
    <location>
        <begin position="248"/>
        <end position="268"/>
    </location>
</feature>
<feature type="topological domain" description="Extracellular" evidence="2">
    <location>
        <begin position="269"/>
        <end position="277"/>
    </location>
</feature>
<feature type="transmembrane region" description="Helical" evidence="2">
    <location>
        <begin position="278"/>
        <end position="295"/>
    </location>
</feature>
<feature type="topological domain" description="Cytoplasmic" evidence="2">
    <location>
        <begin position="296"/>
        <end position="646"/>
    </location>
</feature>
<feature type="transmembrane region" description="Helical" evidence="2">
    <location>
        <begin position="647"/>
        <end position="666"/>
    </location>
</feature>
<feature type="topological domain" description="Extracellular" evidence="2">
    <location>
        <begin position="667"/>
        <end position="674"/>
    </location>
</feature>
<feature type="transmembrane region" description="Helical" evidence="2">
    <location>
        <begin position="675"/>
        <end position="697"/>
    </location>
</feature>
<feature type="topological domain" description="Cytoplasmic" evidence="2">
    <location>
        <begin position="698"/>
        <end position="713"/>
    </location>
</feature>
<feature type="transmembrane region" description="Helical" evidence="2">
    <location>
        <begin position="714"/>
        <end position="734"/>
    </location>
</feature>
<feature type="topological domain" description="Extracellular" evidence="2">
    <location>
        <begin position="735"/>
        <end position="759"/>
    </location>
</feature>
<feature type="transmembrane region" description="Helical" evidence="2">
    <location>
        <begin position="760"/>
        <end position="780"/>
    </location>
</feature>
<feature type="topological domain" description="Cytoplasmic" evidence="2">
    <location>
        <begin position="781"/>
        <end position="792"/>
    </location>
</feature>
<feature type="transmembrane region" description="Helical" evidence="2">
    <location>
        <begin position="793"/>
        <end position="813"/>
    </location>
</feature>
<feature type="topological domain" description="Extracellular" evidence="2">
    <location>
        <begin position="814"/>
        <end position="821"/>
    </location>
</feature>
<feature type="transmembrane region" description="Helical" evidence="2">
    <location>
        <begin position="822"/>
        <end position="842"/>
    </location>
</feature>
<feature type="topological domain" description="Cytoplasmic" evidence="2">
    <location>
        <begin position="843"/>
        <end position="956"/>
    </location>
</feature>
<feature type="active site" description="4-aspartylphosphate intermediate" evidence="1">
    <location>
        <position position="333"/>
    </location>
</feature>
<feature type="binding site" evidence="1">
    <location>
        <position position="592"/>
    </location>
    <ligand>
        <name>Mg(2+)</name>
        <dbReference type="ChEBI" id="CHEBI:18420"/>
    </ligand>
</feature>
<feature type="binding site" evidence="1">
    <location>
        <position position="596"/>
    </location>
    <ligand>
        <name>Mg(2+)</name>
        <dbReference type="ChEBI" id="CHEBI:18420"/>
    </ligand>
</feature>
<comment type="function">
    <text>The plasma membrane ATPase of plants and fungi is a hydrogen ion pump. The proton gradient it generates drives the active transport of nutrients by H(+)-symport. The resulting external acidification and/or internal alkinization may mediate growth responses.</text>
</comment>
<comment type="catalytic activity">
    <reaction>
        <text>ATP + H2O + H(+)(in) = ADP + phosphate + 2 H(+)(out)</text>
        <dbReference type="Rhea" id="RHEA:20852"/>
        <dbReference type="ChEBI" id="CHEBI:15377"/>
        <dbReference type="ChEBI" id="CHEBI:15378"/>
        <dbReference type="ChEBI" id="CHEBI:30616"/>
        <dbReference type="ChEBI" id="CHEBI:43474"/>
        <dbReference type="ChEBI" id="CHEBI:456216"/>
        <dbReference type="EC" id="7.1.2.1"/>
    </reaction>
</comment>
<comment type="subunit">
    <text>Possibly exists as a homodimer or a homotrimer.</text>
</comment>
<comment type="subcellular location">
    <subcellularLocation>
        <location>Cell membrane</location>
        <topology>Multi-pass membrane protein</topology>
    </subcellularLocation>
</comment>
<comment type="miscellaneous">
    <text>As many as 6 to 8 closely related genes may encode other isoforms of plasma membrane ATPase in tomato, like the LHA2 gene product which is 96% identical to the LHA1 gene product.</text>
</comment>
<comment type="similarity">
    <text evidence="3">Belongs to the cation transport ATPase (P-type) (TC 3.A.3) family. Type IIIA subfamily.</text>
</comment>
<keyword id="KW-0067">ATP-binding</keyword>
<keyword id="KW-1003">Cell membrane</keyword>
<keyword id="KW-0375">Hydrogen ion transport</keyword>
<keyword id="KW-0406">Ion transport</keyword>
<keyword id="KW-0460">Magnesium</keyword>
<keyword id="KW-0472">Membrane</keyword>
<keyword id="KW-0479">Metal-binding</keyword>
<keyword id="KW-0547">Nucleotide-binding</keyword>
<keyword id="KW-0597">Phosphoprotein</keyword>
<keyword id="KW-1185">Reference proteome</keyword>
<keyword id="KW-1278">Translocase</keyword>
<keyword id="KW-0812">Transmembrane</keyword>
<keyword id="KW-1133">Transmembrane helix</keyword>
<keyword id="KW-0813">Transport</keyword>
<accession>P22180</accession>
<reference key="1">
    <citation type="journal article" date="1990" name="Plant Physiol.">
        <title>Molecular cloning of tomato plasma membrane H+-ATPase.</title>
        <authorList>
            <person name="Ewing N.N."/>
            <person name="Wimmers L.E."/>
            <person name="Meyer D.J."/>
            <person name="Chetelat R.T."/>
            <person name="Bennett A.B."/>
        </authorList>
    </citation>
    <scope>NUCLEOTIDE SEQUENCE [MRNA]</scope>
    <source>
        <strain>cv. Castlemart</strain>
        <tissue>Root</tissue>
    </source>
</reference>
<name>PMA1_SOLLC</name>
<evidence type="ECO:0000250" key="1"/>
<evidence type="ECO:0000255" key="2"/>
<evidence type="ECO:0000305" key="3"/>
<gene>
    <name type="primary">LHA1</name>
</gene>
<protein>
    <recommendedName>
        <fullName>Plasma membrane ATPase 1</fullName>
        <ecNumber>7.1.2.1</ecNumber>
    </recommendedName>
    <alternativeName>
        <fullName>Proton pump 1</fullName>
    </alternativeName>
</protein>
<organism>
    <name type="scientific">Solanum lycopersicum</name>
    <name type="common">Tomato</name>
    <name type="synonym">Lycopersicon esculentum</name>
    <dbReference type="NCBI Taxonomy" id="4081"/>
    <lineage>
        <taxon>Eukaryota</taxon>
        <taxon>Viridiplantae</taxon>
        <taxon>Streptophyta</taxon>
        <taxon>Embryophyta</taxon>
        <taxon>Tracheophyta</taxon>
        <taxon>Spermatophyta</taxon>
        <taxon>Magnoliopsida</taxon>
        <taxon>eudicotyledons</taxon>
        <taxon>Gunneridae</taxon>
        <taxon>Pentapetalae</taxon>
        <taxon>asterids</taxon>
        <taxon>lamiids</taxon>
        <taxon>Solanales</taxon>
        <taxon>Solanaceae</taxon>
        <taxon>Solanoideae</taxon>
        <taxon>Solaneae</taxon>
        <taxon>Solanum</taxon>
        <taxon>Solanum subgen. Lycopersicon</taxon>
    </lineage>
</organism>
<proteinExistence type="evidence at transcript level"/>
<sequence length="956" mass="105103">MAEKPEVLDAVLKETVDLENIPIEEVFENLRCTREGLTATAAQERLSIFGYNKLEEKKESKFLKFLGFMWNPLSWVMEAAAIMAIALANGGGKPPDWQDFVGIITLLIINSTISFIEENNAGNAAAALMARLAPKAKVLRDGKWDEEDASVLVPGDIISIKLGDIIPADARLLEGDPLKIDQSALTGESLPVTKGPGDGVYSGSTCKQGEIEAVVIATGVHTFFGKAAHLVDSTNQVGHFQKVLTAIGNFCICSIAVGMIIEIIVMYPIQHRKYRPGIDNLLVLLIGGIPIAMPTVLSVTMAIGSHRLAQQGAITKRMTAIEEMAGMDVLCSDKTGTLTLNKLTVDKALIEVFAKGIDADTVVLMAARASRIENQDAIDTAIVGMLADPKEARAGIREIHFLPFNPTDKRTALTYLDGEGKMHRVSKGAPEQILNLAHNKSDIERRVHTVIDKFAERGLRSLGVAYQEVPEGRKESAGGPWQFIALLPLFDPPRHDSAETIRRALNLGVNVKMITGDQLAIGKETGRRLGMGTNMYPSSALLGQTKDESIAALPIDELIEKADGFAGVFPEHKYEIVKRLQARKHICGMTGDGVNDAPALKKADIGIAVDDATDAARSASDIVLTEPGLSVIISAVLTSRAIFQRMKNYTIYAVSITIRIVLGFMLLALIWKFDFPPFMVLIIAILNDGTIMTISKDRVKPSPLPDSWKLAEIFTTGVVLGGYLAMMTVIFFWAAYKTNFFPRIFGVSTLEKTATDDFRKLASAIYLQVSTISQALIFVTRSRSWSFVERPGLLLVFAFFVAQLVATLIAVYANWSFAAIEGIGWGWAGVIWLYNIVTYIPLDLIKFLIRYALSGKAWDLVLEQRIAFTRKKDFGKELRELQWAHAQRTLHGLQVPDPKIFSETTNFNELNQLAEEAKRRAEIARLRELHTLKGHVESVVKLKGLDIETIQQSYTV</sequence>
<dbReference type="EC" id="7.1.2.1"/>
<dbReference type="EMBL" id="M60166">
    <property type="protein sequence ID" value="AAA34173.1"/>
    <property type="molecule type" value="mRNA"/>
</dbReference>
<dbReference type="PIR" id="A45506">
    <property type="entry name" value="A45506"/>
</dbReference>
<dbReference type="RefSeq" id="NP_001234775.1">
    <property type="nucleotide sequence ID" value="NM_001247846.1"/>
</dbReference>
<dbReference type="SMR" id="P22180"/>
<dbReference type="FunCoup" id="P22180">
    <property type="interactions" value="640"/>
</dbReference>
<dbReference type="STRING" id="4081.P22180"/>
<dbReference type="iPTMnet" id="P22180"/>
<dbReference type="PaxDb" id="4081-Solyc03g113400.2.1"/>
<dbReference type="GeneID" id="543982"/>
<dbReference type="KEGG" id="sly:543982"/>
<dbReference type="eggNOG" id="KOG0205">
    <property type="taxonomic scope" value="Eukaryota"/>
</dbReference>
<dbReference type="HOGENOM" id="CLU_002360_6_4_1"/>
<dbReference type="InParanoid" id="P22180"/>
<dbReference type="OrthoDB" id="116380at2759"/>
<dbReference type="PhylomeDB" id="P22180"/>
<dbReference type="BRENDA" id="7.1.2.1">
    <property type="organism ID" value="3101"/>
</dbReference>
<dbReference type="Proteomes" id="UP000004994">
    <property type="component" value="Unplaced"/>
</dbReference>
<dbReference type="ExpressionAtlas" id="P22180">
    <property type="expression patterns" value="baseline and differential"/>
</dbReference>
<dbReference type="GO" id="GO:0005886">
    <property type="term" value="C:plasma membrane"/>
    <property type="evidence" value="ECO:0000318"/>
    <property type="project" value="GO_Central"/>
</dbReference>
<dbReference type="GO" id="GO:0005524">
    <property type="term" value="F:ATP binding"/>
    <property type="evidence" value="ECO:0007669"/>
    <property type="project" value="UniProtKB-KW"/>
</dbReference>
<dbReference type="GO" id="GO:0016887">
    <property type="term" value="F:ATP hydrolysis activity"/>
    <property type="evidence" value="ECO:0007669"/>
    <property type="project" value="InterPro"/>
</dbReference>
<dbReference type="GO" id="GO:0046872">
    <property type="term" value="F:metal ion binding"/>
    <property type="evidence" value="ECO:0007669"/>
    <property type="project" value="UniProtKB-KW"/>
</dbReference>
<dbReference type="GO" id="GO:0008553">
    <property type="term" value="F:P-type proton-exporting transporter activity"/>
    <property type="evidence" value="ECO:0000318"/>
    <property type="project" value="GO_Central"/>
</dbReference>
<dbReference type="GO" id="GO:0120029">
    <property type="term" value="P:proton export across plasma membrane"/>
    <property type="evidence" value="ECO:0007669"/>
    <property type="project" value="InterPro"/>
</dbReference>
<dbReference type="GO" id="GO:1902600">
    <property type="term" value="P:proton transmembrane transport"/>
    <property type="evidence" value="ECO:0000318"/>
    <property type="project" value="GO_Central"/>
</dbReference>
<dbReference type="GO" id="GO:0051453">
    <property type="term" value="P:regulation of intracellular pH"/>
    <property type="evidence" value="ECO:0000318"/>
    <property type="project" value="GO_Central"/>
</dbReference>
<dbReference type="CDD" id="cd02076">
    <property type="entry name" value="P-type_ATPase_H"/>
    <property type="match status" value="1"/>
</dbReference>
<dbReference type="FunFam" id="1.20.1110.10:FF:000045">
    <property type="entry name" value="ATPase 4 plasma membrane-type"/>
    <property type="match status" value="1"/>
</dbReference>
<dbReference type="FunFam" id="2.70.150.10:FF:000004">
    <property type="entry name" value="Plasma membrane ATPase"/>
    <property type="match status" value="1"/>
</dbReference>
<dbReference type="FunFam" id="3.40.1110.10:FF:000004">
    <property type="entry name" value="Plasma membrane ATPase"/>
    <property type="match status" value="1"/>
</dbReference>
<dbReference type="FunFam" id="3.40.50.1000:FF:000211">
    <property type="entry name" value="Plasma membrane ATPase"/>
    <property type="match status" value="1"/>
</dbReference>
<dbReference type="Gene3D" id="6.10.140.890">
    <property type="match status" value="1"/>
</dbReference>
<dbReference type="Gene3D" id="3.40.1110.10">
    <property type="entry name" value="Calcium-transporting ATPase, cytoplasmic domain N"/>
    <property type="match status" value="1"/>
</dbReference>
<dbReference type="Gene3D" id="2.70.150.10">
    <property type="entry name" value="Calcium-transporting ATPase, cytoplasmic transduction domain A"/>
    <property type="match status" value="1"/>
</dbReference>
<dbReference type="Gene3D" id="1.20.1110.10">
    <property type="entry name" value="Calcium-transporting ATPase, transmembrane domain"/>
    <property type="match status" value="1"/>
</dbReference>
<dbReference type="Gene3D" id="3.40.50.1000">
    <property type="entry name" value="HAD superfamily/HAD-like"/>
    <property type="match status" value="1"/>
</dbReference>
<dbReference type="InterPro" id="IPR004014">
    <property type="entry name" value="ATPase_P-typ_cation-transptr_N"/>
</dbReference>
<dbReference type="InterPro" id="IPR023299">
    <property type="entry name" value="ATPase_P-typ_cyto_dom_N"/>
</dbReference>
<dbReference type="InterPro" id="IPR018303">
    <property type="entry name" value="ATPase_P-typ_P_site"/>
</dbReference>
<dbReference type="InterPro" id="IPR023298">
    <property type="entry name" value="ATPase_P-typ_TM_dom_sf"/>
</dbReference>
<dbReference type="InterPro" id="IPR008250">
    <property type="entry name" value="ATPase_P-typ_transduc_dom_A_sf"/>
</dbReference>
<dbReference type="InterPro" id="IPR036412">
    <property type="entry name" value="HAD-like_sf"/>
</dbReference>
<dbReference type="InterPro" id="IPR023214">
    <property type="entry name" value="HAD_sf"/>
</dbReference>
<dbReference type="InterPro" id="IPR006534">
    <property type="entry name" value="P-type_ATPase_IIIA"/>
</dbReference>
<dbReference type="InterPro" id="IPR001757">
    <property type="entry name" value="P_typ_ATPase"/>
</dbReference>
<dbReference type="InterPro" id="IPR044492">
    <property type="entry name" value="P_typ_ATPase_HD_dom"/>
</dbReference>
<dbReference type="NCBIfam" id="TIGR01647">
    <property type="entry name" value="ATPase-IIIA_H"/>
    <property type="match status" value="1"/>
</dbReference>
<dbReference type="NCBIfam" id="TIGR01494">
    <property type="entry name" value="ATPase_P-type"/>
    <property type="match status" value="2"/>
</dbReference>
<dbReference type="PANTHER" id="PTHR42861">
    <property type="entry name" value="CALCIUM-TRANSPORTING ATPASE"/>
    <property type="match status" value="1"/>
</dbReference>
<dbReference type="Pfam" id="PF00690">
    <property type="entry name" value="Cation_ATPase_N"/>
    <property type="match status" value="1"/>
</dbReference>
<dbReference type="Pfam" id="PF00122">
    <property type="entry name" value="E1-E2_ATPase"/>
    <property type="match status" value="1"/>
</dbReference>
<dbReference type="Pfam" id="PF00702">
    <property type="entry name" value="Hydrolase"/>
    <property type="match status" value="1"/>
</dbReference>
<dbReference type="PRINTS" id="PR00119">
    <property type="entry name" value="CATATPASE"/>
</dbReference>
<dbReference type="PRINTS" id="PR00120">
    <property type="entry name" value="HATPASE"/>
</dbReference>
<dbReference type="SFLD" id="SFLDG00002">
    <property type="entry name" value="C1.7:_P-type_atpase_like"/>
    <property type="match status" value="1"/>
</dbReference>
<dbReference type="SFLD" id="SFLDF00027">
    <property type="entry name" value="p-type_atpase"/>
    <property type="match status" value="1"/>
</dbReference>
<dbReference type="SMART" id="SM00831">
    <property type="entry name" value="Cation_ATPase_N"/>
    <property type="match status" value="1"/>
</dbReference>
<dbReference type="SUPFAM" id="SSF81653">
    <property type="entry name" value="Calcium ATPase, transduction domain A"/>
    <property type="match status" value="1"/>
</dbReference>
<dbReference type="SUPFAM" id="SSF81665">
    <property type="entry name" value="Calcium ATPase, transmembrane domain M"/>
    <property type="match status" value="1"/>
</dbReference>
<dbReference type="SUPFAM" id="SSF56784">
    <property type="entry name" value="HAD-like"/>
    <property type="match status" value="1"/>
</dbReference>
<dbReference type="PROSITE" id="PS00154">
    <property type="entry name" value="ATPASE_E1_E2"/>
    <property type="match status" value="1"/>
</dbReference>